<organism>
    <name type="scientific">Rattus norvegicus</name>
    <name type="common">Rat</name>
    <dbReference type="NCBI Taxonomy" id="10116"/>
    <lineage>
        <taxon>Eukaryota</taxon>
        <taxon>Metazoa</taxon>
        <taxon>Chordata</taxon>
        <taxon>Craniata</taxon>
        <taxon>Vertebrata</taxon>
        <taxon>Euteleostomi</taxon>
        <taxon>Mammalia</taxon>
        <taxon>Eutheria</taxon>
        <taxon>Euarchontoglires</taxon>
        <taxon>Glires</taxon>
        <taxon>Rodentia</taxon>
        <taxon>Myomorpha</taxon>
        <taxon>Muroidea</taxon>
        <taxon>Muridae</taxon>
        <taxon>Murinae</taxon>
        <taxon>Rattus</taxon>
    </lineage>
</organism>
<comment type="function">
    <text evidence="4">Intramembrane-cleaving aspartic protease (I-CLiP) that cleaves type II membrane signal peptides in the hydrophobic plane of the membrane. Functions in ITM2B and TNF processing. Catalyzes the intramembrane cleavage of the anchored fragment of shed TNF-alpha (TNF), which promotes the release of the intracellular domain (ICD) for signaling to the nucleus. May play a role in the regulation of innate and adaptive immunity.</text>
</comment>
<comment type="subunit">
    <text evidence="4">Monomer. Homodimer. Interacts with ITM2B and TNF.</text>
</comment>
<comment type="subcellular location">
    <subcellularLocation>
        <location evidence="3">Cell membrane</location>
        <topology evidence="7">Multi-pass membrane protein</topology>
    </subcellularLocation>
    <subcellularLocation>
        <location evidence="4">Golgi apparatus membrane</location>
        <topology evidence="4">Multi-pass membrane protein</topology>
    </subcellularLocation>
    <subcellularLocation>
        <location evidence="4">Lysosome membrane</location>
        <topology evidence="4">Multi-pass membrane protein</topology>
    </subcellularLocation>
    <subcellularLocation>
        <location evidence="4">Endosome membrane</location>
        <topology evidence="4">Multi-pass membrane protein</topology>
    </subcellularLocation>
    <subcellularLocation>
        <location evidence="4">Membrane</location>
        <topology evidence="4">Multi-pass membrane protein</topology>
        <orientation evidence="4">Lumenal side</orientation>
    </subcellularLocation>
    <text evidence="4">targeted through the entire secretory pathway to endosomes/lysosomes.</text>
</comment>
<comment type="domain">
    <text evidence="1">The PAL motif is required for normal active site conformation. The catalytic domains embedded in the membrane are in the opposite orientation to that of the presenilin protein family; therefore, it is predicted to cleave type II-oriented substrate peptides like the prototypic protease SPP.</text>
</comment>
<comment type="PTM">
    <text evidence="4">Glycosylated.</text>
</comment>
<comment type="similarity">
    <text evidence="7">Belongs to the peptidase A22B family.</text>
</comment>
<name>SPP2B_RAT</name>
<proteinExistence type="evidence at transcript level"/>
<dbReference type="EC" id="3.4.23.-"/>
<dbReference type="EMBL" id="BC087132">
    <property type="protein sequence ID" value="AAH87132.1"/>
    <property type="molecule type" value="mRNA"/>
</dbReference>
<dbReference type="RefSeq" id="NP_001014222.1">
    <property type="nucleotide sequence ID" value="NM_001014200.2"/>
</dbReference>
<dbReference type="FunCoup" id="Q5PQL3">
    <property type="interactions" value="1251"/>
</dbReference>
<dbReference type="STRING" id="10116.ENSRNOP00000074120"/>
<dbReference type="GlyCosmos" id="Q5PQL3">
    <property type="glycosylation" value="1 site, No reported glycans"/>
</dbReference>
<dbReference type="GlyGen" id="Q5PQL3">
    <property type="glycosylation" value="1 site"/>
</dbReference>
<dbReference type="PhosphoSitePlus" id="Q5PQL3"/>
<dbReference type="SwissPalm" id="Q5PQL3"/>
<dbReference type="PaxDb" id="10116-ENSRNOP00000050649"/>
<dbReference type="GeneID" id="362828"/>
<dbReference type="KEGG" id="rno:362828"/>
<dbReference type="UCSC" id="RGD:1308556">
    <property type="organism name" value="rat"/>
</dbReference>
<dbReference type="AGR" id="RGD:1308556"/>
<dbReference type="CTD" id="56928"/>
<dbReference type="RGD" id="1308556">
    <property type="gene designation" value="Sppl2b"/>
</dbReference>
<dbReference type="VEuPathDB" id="HostDB:ENSRNOG00000057881"/>
<dbReference type="eggNOG" id="KOG2442">
    <property type="taxonomic scope" value="Eukaryota"/>
</dbReference>
<dbReference type="HOGENOM" id="CLU_023799_2_1_1"/>
<dbReference type="InParanoid" id="Q5PQL3"/>
<dbReference type="PhylomeDB" id="Q5PQL3"/>
<dbReference type="TreeFam" id="TF319186"/>
<dbReference type="Reactome" id="R-RNO-5357905">
    <property type="pathway name" value="Regulation of TNFR1 signaling"/>
</dbReference>
<dbReference type="PRO" id="PR:Q5PQL3"/>
<dbReference type="Proteomes" id="UP000002494">
    <property type="component" value="Chromosome 7"/>
</dbReference>
<dbReference type="Bgee" id="ENSRNOG00000057881">
    <property type="expression patterns" value="Expressed in pancreas and 19 other cell types or tissues"/>
</dbReference>
<dbReference type="GO" id="GO:0098554">
    <property type="term" value="C:cytoplasmic side of endoplasmic reticulum membrane"/>
    <property type="evidence" value="ECO:0000250"/>
    <property type="project" value="UniProtKB"/>
</dbReference>
<dbReference type="GO" id="GO:0010008">
    <property type="term" value="C:endosome membrane"/>
    <property type="evidence" value="ECO:0000250"/>
    <property type="project" value="UniProtKB"/>
</dbReference>
<dbReference type="GO" id="GO:0000139">
    <property type="term" value="C:Golgi membrane"/>
    <property type="evidence" value="ECO:0007669"/>
    <property type="project" value="UniProtKB-SubCell"/>
</dbReference>
<dbReference type="GO" id="GO:0030660">
    <property type="term" value="C:Golgi-associated vesicle membrane"/>
    <property type="evidence" value="ECO:0000250"/>
    <property type="project" value="UniProtKB"/>
</dbReference>
<dbReference type="GO" id="GO:0098553">
    <property type="term" value="C:lumenal side of endoplasmic reticulum membrane"/>
    <property type="evidence" value="ECO:0000250"/>
    <property type="project" value="UniProtKB"/>
</dbReference>
<dbReference type="GO" id="GO:0005765">
    <property type="term" value="C:lysosomal membrane"/>
    <property type="evidence" value="ECO:0000250"/>
    <property type="project" value="UniProtKB"/>
</dbReference>
<dbReference type="GO" id="GO:0016020">
    <property type="term" value="C:membrane"/>
    <property type="evidence" value="ECO:0000250"/>
    <property type="project" value="UniProtKB"/>
</dbReference>
<dbReference type="GO" id="GO:0005886">
    <property type="term" value="C:plasma membrane"/>
    <property type="evidence" value="ECO:0000250"/>
    <property type="project" value="UniProtKB"/>
</dbReference>
<dbReference type="GO" id="GO:0042500">
    <property type="term" value="F:aspartic endopeptidase activity, intramembrane cleaving"/>
    <property type="evidence" value="ECO:0000266"/>
    <property type="project" value="RGD"/>
</dbReference>
<dbReference type="GO" id="GO:0042803">
    <property type="term" value="F:protein homodimerization activity"/>
    <property type="evidence" value="ECO:0000250"/>
    <property type="project" value="UniProtKB"/>
</dbReference>
<dbReference type="GO" id="GO:0006509">
    <property type="term" value="P:membrane protein ectodomain proteolysis"/>
    <property type="evidence" value="ECO:0000250"/>
    <property type="project" value="UniProtKB"/>
</dbReference>
<dbReference type="GO" id="GO:0031293">
    <property type="term" value="P:membrane protein intracellular domain proteolysis"/>
    <property type="evidence" value="ECO:0000250"/>
    <property type="project" value="UniProtKB"/>
</dbReference>
<dbReference type="GO" id="GO:0033619">
    <property type="term" value="P:membrane protein proteolysis"/>
    <property type="evidence" value="ECO:0000250"/>
    <property type="project" value="UniProtKB"/>
</dbReference>
<dbReference type="GO" id="GO:0050776">
    <property type="term" value="P:regulation of immune response"/>
    <property type="evidence" value="ECO:0000250"/>
    <property type="project" value="UniProtKB"/>
</dbReference>
<dbReference type="CDD" id="cd02129">
    <property type="entry name" value="PA_hSPPL_like"/>
    <property type="match status" value="1"/>
</dbReference>
<dbReference type="Gene3D" id="3.50.30.30">
    <property type="match status" value="1"/>
</dbReference>
<dbReference type="InterPro" id="IPR046450">
    <property type="entry name" value="PA_dom_sf"/>
</dbReference>
<dbReference type="InterPro" id="IPR003137">
    <property type="entry name" value="PA_domain"/>
</dbReference>
<dbReference type="InterPro" id="IPR007369">
    <property type="entry name" value="Peptidase_A22B_SPP"/>
</dbReference>
<dbReference type="InterPro" id="IPR006639">
    <property type="entry name" value="Preselin/SPP"/>
</dbReference>
<dbReference type="PANTHER" id="PTHR12174">
    <property type="entry name" value="SIGNAL PEPTIDE PEPTIDASE"/>
    <property type="match status" value="1"/>
</dbReference>
<dbReference type="PANTHER" id="PTHR12174:SF39">
    <property type="entry name" value="SIGNAL PEPTIDE PEPTIDASE-LIKE 2B"/>
    <property type="match status" value="1"/>
</dbReference>
<dbReference type="Pfam" id="PF02225">
    <property type="entry name" value="PA"/>
    <property type="match status" value="1"/>
</dbReference>
<dbReference type="Pfam" id="PF04258">
    <property type="entry name" value="Peptidase_A22B"/>
    <property type="match status" value="1"/>
</dbReference>
<dbReference type="SMART" id="SM00730">
    <property type="entry name" value="PSN"/>
    <property type="match status" value="1"/>
</dbReference>
<dbReference type="SUPFAM" id="SSF52025">
    <property type="entry name" value="PA domain"/>
    <property type="match status" value="1"/>
</dbReference>
<feature type="signal peptide" evidence="4">
    <location>
        <begin position="1"/>
        <end position="19"/>
    </location>
</feature>
<feature type="chain" id="PRO_0000236077" description="Signal peptide peptidase-like 2B">
    <location>
        <begin position="20"/>
        <end position="577"/>
    </location>
</feature>
<feature type="topological domain" description="Lumenal" evidence="4">
    <location>
        <begin position="20"/>
        <end position="168"/>
    </location>
</feature>
<feature type="transmembrane region" description="Helical" evidence="5">
    <location>
        <begin position="169"/>
        <end position="189"/>
    </location>
</feature>
<feature type="topological domain" description="Cytoplasmic" evidence="5">
    <location>
        <begin position="190"/>
        <end position="216"/>
    </location>
</feature>
<feature type="transmembrane region" description="Helical" evidence="5">
    <location>
        <begin position="217"/>
        <end position="237"/>
    </location>
</feature>
<feature type="topological domain" description="Lumenal" evidence="5">
    <location>
        <begin position="238"/>
        <end position="239"/>
    </location>
</feature>
<feature type="transmembrane region" description="Helical" evidence="5">
    <location>
        <begin position="240"/>
        <end position="260"/>
    </location>
</feature>
<feature type="topological domain" description="Cytoplasmic" evidence="5">
    <location>
        <begin position="261"/>
        <end position="286"/>
    </location>
</feature>
<feature type="transmembrane region" description="Helical" evidence="5">
    <location>
        <begin position="287"/>
        <end position="307"/>
    </location>
</feature>
<feature type="topological domain" description="Lumenal" evidence="5">
    <location>
        <begin position="308"/>
        <end position="312"/>
    </location>
</feature>
<feature type="transmembrane region" description="Helical" evidence="5">
    <location>
        <begin position="313"/>
        <end position="333"/>
    </location>
</feature>
<feature type="topological domain" description="Cytoplasmic" evidence="5">
    <location>
        <begin position="334"/>
        <end position="341"/>
    </location>
</feature>
<feature type="transmembrane region" description="Helical" evidence="5">
    <location>
        <begin position="342"/>
        <end position="362"/>
    </location>
</feature>
<feature type="topological domain" description="Lumenal" evidence="4">
    <location>
        <begin position="363"/>
        <end position="405"/>
    </location>
</feature>
<feature type="transmembrane region" description="Helical" evidence="5">
    <location>
        <begin position="406"/>
        <end position="426"/>
    </location>
</feature>
<feature type="topological domain" description="Cytoplasmic" evidence="5">
    <location>
        <begin position="427"/>
        <end position="438"/>
    </location>
</feature>
<feature type="transmembrane region" description="Helical" evidence="5">
    <location>
        <begin position="439"/>
        <end position="459"/>
    </location>
</feature>
<feature type="topological domain" description="Lumenal" evidence="5">
    <location>
        <begin position="460"/>
        <end position="463"/>
    </location>
</feature>
<feature type="transmembrane region" description="Helical" evidence="5">
    <location>
        <begin position="464"/>
        <end position="484"/>
    </location>
</feature>
<feature type="topological domain" description="Cytoplasmic" evidence="4">
    <location>
        <begin position="485"/>
        <end position="577"/>
    </location>
</feature>
<feature type="domain" description="PA">
    <location>
        <begin position="49"/>
        <end position="149"/>
    </location>
</feature>
<feature type="region of interest" description="Disordered" evidence="6">
    <location>
        <begin position="502"/>
        <end position="577"/>
    </location>
</feature>
<feature type="short sequence motif" description="PAL">
    <location>
        <begin position="465"/>
        <end position="467"/>
    </location>
</feature>
<feature type="active site" evidence="2">
    <location>
        <position position="352"/>
    </location>
</feature>
<feature type="active site" evidence="2">
    <location>
        <position position="414"/>
    </location>
</feature>
<feature type="glycosylation site" description="N-linked (GlcNAc...) asparagine" evidence="5">
    <location>
        <position position="91"/>
    </location>
</feature>
<keyword id="KW-1003">Cell membrane</keyword>
<keyword id="KW-0967">Endosome</keyword>
<keyword id="KW-0325">Glycoprotein</keyword>
<keyword id="KW-0333">Golgi apparatus</keyword>
<keyword id="KW-0378">Hydrolase</keyword>
<keyword id="KW-0458">Lysosome</keyword>
<keyword id="KW-0472">Membrane</keyword>
<keyword id="KW-0645">Protease</keyword>
<keyword id="KW-1185">Reference proteome</keyword>
<keyword id="KW-0732">Signal</keyword>
<keyword id="KW-0812">Transmembrane</keyword>
<keyword id="KW-1133">Transmembrane helix</keyword>
<protein>
    <recommendedName>
        <fullName evidence="4">Signal peptide peptidase-like 2B</fullName>
        <shortName evidence="4">SPP-like 2B</shortName>
        <shortName evidence="4">SPPL2b</shortName>
        <ecNumber>3.4.23.-</ecNumber>
    </recommendedName>
</protein>
<sequence length="577" mass="63737">MAAARLAASLLLLAAQVACEFGVLRVVPQSGGTRGRDYCILYNPQWAHLPHDLNKVSLLKLRDLSTTQLCSHLDVPVEDFTNQIALVARGNCTFYEKVRLAQGSGAHGLLIVSKERLVPPRGNKTQYEEISIPVALLSHRDLQDIFRRFGHEVMVALYAPSEPVMDYNMVIIFIMAVGTVALGGYWAGSHDVKKYMKHKRDDVPEKQEDEAVDVTPVMICVFVVMCCFMLVLLYYFYDRLVYVIIGIFCLASSTGLYSCLAPCVRKLPFCTCRVPDNNLPYFHKRPQARMLLLALFCVTVSVVWGVFRNEDQWAWVLQDTLGIAFCLYMLRTIRLPTFKACTLLLLVLFVYDIFFVFITPYLTKSGNSIMVEVATGPSNSSTHEKLPMVLKVPRLNTSPLSLCDRPFSLLGFGDILVPGLLVAYCHRFDIQVQSSRIYFVACTIAYGLGLLVTFVALVLMRHGQPALLYLVPCTLLTSCTVALWRREMGAFWTGSGFADAPQTPWAAPQGPVPPKDVDASLSEQPRGEELAQSPLATEEAGATDPAKDPDSPVAGPLSPSNGDQVQPIPVVTPGTSA</sequence>
<evidence type="ECO:0000250" key="1">
    <source>
        <dbReference type="UniProtKB" id="P49768"/>
    </source>
</evidence>
<evidence type="ECO:0000250" key="2">
    <source>
        <dbReference type="UniProtKB" id="P49810"/>
    </source>
</evidence>
<evidence type="ECO:0000250" key="3">
    <source>
        <dbReference type="UniProtKB" id="Q3TD49"/>
    </source>
</evidence>
<evidence type="ECO:0000250" key="4">
    <source>
        <dbReference type="UniProtKB" id="Q8TCT7"/>
    </source>
</evidence>
<evidence type="ECO:0000255" key="5"/>
<evidence type="ECO:0000256" key="6">
    <source>
        <dbReference type="SAM" id="MobiDB-lite"/>
    </source>
</evidence>
<evidence type="ECO:0000305" key="7"/>
<evidence type="ECO:0000312" key="8">
    <source>
        <dbReference type="RGD" id="1308556"/>
    </source>
</evidence>
<gene>
    <name evidence="4 8" type="primary">Sppl2b</name>
</gene>
<reference key="1">
    <citation type="journal article" date="2004" name="Genome Res.">
        <title>The status, quality, and expansion of the NIH full-length cDNA project: the Mammalian Gene Collection (MGC).</title>
        <authorList>
            <consortium name="The MGC Project Team"/>
        </authorList>
    </citation>
    <scope>NUCLEOTIDE SEQUENCE [LARGE SCALE MRNA]</scope>
    <source>
        <tissue>Lung</tissue>
    </source>
</reference>
<accession>Q5PQL3</accession>